<protein>
    <recommendedName>
        <fullName evidence="6">CLAVATA3/ESR (CLE)-related protein 3</fullName>
    </recommendedName>
    <component>
        <recommendedName>
            <fullName evidence="6">CLE3p</fullName>
        </recommendedName>
    </component>
</protein>
<feature type="signal peptide" evidence="2">
    <location>
        <begin position="1"/>
        <end position="24"/>
    </location>
</feature>
<feature type="chain" id="PRO_0000401237" description="CLAVATA3/ESR (CLE)-related protein 3">
    <location>
        <begin position="25"/>
        <end position="83"/>
    </location>
</feature>
<feature type="peptide" id="PRO_0000401238" description="CLE3p" evidence="1">
    <location>
        <begin position="72"/>
        <end position="83"/>
    </location>
</feature>
<feature type="region of interest" description="Disordered" evidence="3">
    <location>
        <begin position="53"/>
        <end position="83"/>
    </location>
</feature>
<feature type="coiled-coil region" evidence="2">
    <location>
        <begin position="38"/>
        <end position="58"/>
    </location>
</feature>
<feature type="modified residue" description="Hydroxyproline" evidence="1">
    <location>
        <position position="75"/>
    </location>
</feature>
<feature type="modified residue" description="Hydroxyproline" evidence="1">
    <location>
        <position position="78"/>
    </location>
</feature>
<feature type="glycosylation site" description="O-linked (Ara...) hydroxyproline" evidence="1">
    <location>
        <position position="78"/>
    </location>
</feature>
<accession>Q3EDH8</accession>
<accession>A0ME59</accession>
<evidence type="ECO:0000250" key="1">
    <source>
        <dbReference type="UniProtKB" id="O49519"/>
    </source>
</evidence>
<evidence type="ECO:0000255" key="2"/>
<evidence type="ECO:0000256" key="3">
    <source>
        <dbReference type="SAM" id="MobiDB-lite"/>
    </source>
</evidence>
<evidence type="ECO:0000269" key="4">
    <source>
    </source>
</evidence>
<evidence type="ECO:0000269" key="5">
    <source>
    </source>
</evidence>
<evidence type="ECO:0000303" key="6">
    <source>
    </source>
</evidence>
<evidence type="ECO:0000305" key="7"/>
<evidence type="ECO:0000312" key="8">
    <source>
        <dbReference type="Araport" id="AT1G06225"/>
    </source>
</evidence>
<evidence type="ECO:0000312" key="9">
    <source>
        <dbReference type="EMBL" id="AC025290"/>
    </source>
</evidence>
<organism>
    <name type="scientific">Arabidopsis thaliana</name>
    <name type="common">Mouse-ear cress</name>
    <dbReference type="NCBI Taxonomy" id="3702"/>
    <lineage>
        <taxon>Eukaryota</taxon>
        <taxon>Viridiplantae</taxon>
        <taxon>Streptophyta</taxon>
        <taxon>Embryophyta</taxon>
        <taxon>Tracheophyta</taxon>
        <taxon>Spermatophyta</taxon>
        <taxon>Magnoliopsida</taxon>
        <taxon>eudicotyledons</taxon>
        <taxon>Gunneridae</taxon>
        <taxon>Pentapetalae</taxon>
        <taxon>rosids</taxon>
        <taxon>malvids</taxon>
        <taxon>Brassicales</taxon>
        <taxon>Brassicaceae</taxon>
        <taxon>Camelineae</taxon>
        <taxon>Arabidopsis</taxon>
    </lineage>
</organism>
<proteinExistence type="evidence at transcript level"/>
<name>CLE3_ARATH</name>
<reference key="1">
    <citation type="journal article" date="2000" name="Nature">
        <title>Sequence and analysis of chromosome 1 of the plant Arabidopsis thaliana.</title>
        <authorList>
            <person name="Theologis A."/>
            <person name="Ecker J.R."/>
            <person name="Palm C.J."/>
            <person name="Federspiel N.A."/>
            <person name="Kaul S."/>
            <person name="White O."/>
            <person name="Alonso J."/>
            <person name="Altafi H."/>
            <person name="Araujo R."/>
            <person name="Bowman C.L."/>
            <person name="Brooks S.Y."/>
            <person name="Buehler E."/>
            <person name="Chan A."/>
            <person name="Chao Q."/>
            <person name="Chen H."/>
            <person name="Cheuk R.F."/>
            <person name="Chin C.W."/>
            <person name="Chung M.K."/>
            <person name="Conn L."/>
            <person name="Conway A.B."/>
            <person name="Conway A.R."/>
            <person name="Creasy T.H."/>
            <person name="Dewar K."/>
            <person name="Dunn P."/>
            <person name="Etgu P."/>
            <person name="Feldblyum T.V."/>
            <person name="Feng J.-D."/>
            <person name="Fong B."/>
            <person name="Fujii C.Y."/>
            <person name="Gill J.E."/>
            <person name="Goldsmith A.D."/>
            <person name="Haas B."/>
            <person name="Hansen N.F."/>
            <person name="Hughes B."/>
            <person name="Huizar L."/>
            <person name="Hunter J.L."/>
            <person name="Jenkins J."/>
            <person name="Johnson-Hopson C."/>
            <person name="Khan S."/>
            <person name="Khaykin E."/>
            <person name="Kim C.J."/>
            <person name="Koo H.L."/>
            <person name="Kremenetskaia I."/>
            <person name="Kurtz D.B."/>
            <person name="Kwan A."/>
            <person name="Lam B."/>
            <person name="Langin-Hooper S."/>
            <person name="Lee A."/>
            <person name="Lee J.M."/>
            <person name="Lenz C.A."/>
            <person name="Li J.H."/>
            <person name="Li Y.-P."/>
            <person name="Lin X."/>
            <person name="Liu S.X."/>
            <person name="Liu Z.A."/>
            <person name="Luros J.S."/>
            <person name="Maiti R."/>
            <person name="Marziali A."/>
            <person name="Militscher J."/>
            <person name="Miranda M."/>
            <person name="Nguyen M."/>
            <person name="Nierman W.C."/>
            <person name="Osborne B.I."/>
            <person name="Pai G."/>
            <person name="Peterson J."/>
            <person name="Pham P.K."/>
            <person name="Rizzo M."/>
            <person name="Rooney T."/>
            <person name="Rowley D."/>
            <person name="Sakano H."/>
            <person name="Salzberg S.L."/>
            <person name="Schwartz J.R."/>
            <person name="Shinn P."/>
            <person name="Southwick A.M."/>
            <person name="Sun H."/>
            <person name="Tallon L.J."/>
            <person name="Tambunga G."/>
            <person name="Toriumi M.J."/>
            <person name="Town C.D."/>
            <person name="Utterback T."/>
            <person name="Van Aken S."/>
            <person name="Vaysberg M."/>
            <person name="Vysotskaia V.S."/>
            <person name="Walker M."/>
            <person name="Wu D."/>
            <person name="Yu G."/>
            <person name="Fraser C.M."/>
            <person name="Venter J.C."/>
            <person name="Davis R.W."/>
        </authorList>
    </citation>
    <scope>NUCLEOTIDE SEQUENCE [LARGE SCALE GENOMIC DNA]</scope>
    <source>
        <strain>cv. Columbia</strain>
    </source>
</reference>
<reference key="2">
    <citation type="journal article" date="2017" name="Plant J.">
        <title>Araport11: a complete reannotation of the Arabidopsis thaliana reference genome.</title>
        <authorList>
            <person name="Cheng C.Y."/>
            <person name="Krishnakumar V."/>
            <person name="Chan A.P."/>
            <person name="Thibaud-Nissen F."/>
            <person name="Schobel S."/>
            <person name="Town C.D."/>
        </authorList>
    </citation>
    <scope>GENOME REANNOTATION</scope>
    <source>
        <strain>cv. Columbia</strain>
    </source>
</reference>
<reference key="3">
    <citation type="journal article" date="2006" name="Plant Biotechnol. J.">
        <title>Simultaneous high-throughput recombinational cloning of open reading frames in closed and open configurations.</title>
        <authorList>
            <person name="Underwood B.A."/>
            <person name="Vanderhaeghen R."/>
            <person name="Whitford R."/>
            <person name="Town C.D."/>
            <person name="Hilson P."/>
        </authorList>
    </citation>
    <scope>NUCLEOTIDE SEQUENCE [LARGE SCALE MRNA]</scope>
    <source>
        <strain>cv. Columbia</strain>
    </source>
</reference>
<reference key="4">
    <citation type="journal article" date="2001" name="Plant Physiol.">
        <title>A large family of genes that share homology with CLAVATA3.</title>
        <authorList>
            <person name="Cock J.M."/>
            <person name="McCormick S."/>
        </authorList>
    </citation>
    <scope>GENE FAMILY</scope>
    <scope>NOMENCLATURE</scope>
</reference>
<reference key="5">
    <citation type="journal article" date="2003" name="Plant Mol. Biol.">
        <title>The Arabidopsis CLV3-like (CLE) genes are expressed in diverse tissues and encode secreted proteins.</title>
        <authorList>
            <person name="Sharma V.K."/>
            <person name="Ramirez J."/>
            <person name="Fletcher J.C."/>
        </authorList>
    </citation>
    <scope>TISSUE SPECIFICITY</scope>
</reference>
<reference key="6">
    <citation type="journal article" date="2006" name="Plant Physiol.">
        <title>Gain-of-function phenotypes of many CLAVATA3/ESR genes, including four new family members, correlate with tandem variations in the conserved CLAVATA3/ESR domain.</title>
        <authorList>
            <person name="Strabala T.J."/>
            <person name="O'donnell P.J."/>
            <person name="Smit A.-M."/>
            <person name="Ampomah-Dwamena C."/>
            <person name="Martin E.J."/>
            <person name="Netzler N."/>
            <person name="Nieuwenhuizen N.J."/>
            <person name="Quinn B.D."/>
            <person name="Foote H.C.C."/>
            <person name="Hudson K.R."/>
        </authorList>
    </citation>
    <scope>FUNCTION</scope>
    <scope>GENE FAMILY</scope>
</reference>
<reference key="7">
    <citation type="journal article" date="2008" name="Cell. Mol. Life Sci.">
        <title>The CLE family of plant polypeptide signaling molecules.</title>
        <authorList>
            <person name="Jun J.H."/>
            <person name="Fiume E."/>
            <person name="Fletcher J.C."/>
        </authorList>
    </citation>
    <scope>REVIEW</scope>
</reference>
<reference key="8">
    <citation type="journal article" date="2008" name="Curr. Opin. Plant Biol.">
        <title>Diverse and conserved roles of CLE peptides.</title>
        <authorList>
            <person name="Mitchum M.G."/>
            <person name="Wang X."/>
            <person name="Davis E.L."/>
        </authorList>
    </citation>
    <scope>REVIEW</scope>
</reference>
<reference key="9">
    <citation type="journal article" date="2010" name="Protoplasma">
        <title>CLE peptide signaling during plant development.</title>
        <authorList>
            <person name="Wang G."/>
            <person name="Fiers M."/>
        </authorList>
    </citation>
    <scope>REVIEW</scope>
</reference>
<dbReference type="EMBL" id="AC025290">
    <property type="status" value="NOT_ANNOTATED_CDS"/>
    <property type="molecule type" value="Genomic_DNA"/>
</dbReference>
<dbReference type="EMBL" id="CP002684">
    <property type="protein sequence ID" value="AEE27963.1"/>
    <property type="molecule type" value="Genomic_DNA"/>
</dbReference>
<dbReference type="EMBL" id="DQ446232">
    <property type="protein sequence ID" value="ABE65603.1"/>
    <property type="molecule type" value="mRNA"/>
</dbReference>
<dbReference type="EMBL" id="DQ652827">
    <property type="protein sequence ID" value="ABK28387.1"/>
    <property type="status" value="ALT_SEQ"/>
    <property type="molecule type" value="mRNA"/>
</dbReference>
<dbReference type="RefSeq" id="NP_563763.1">
    <property type="nucleotide sequence ID" value="NM_100504.2"/>
</dbReference>
<dbReference type="SMR" id="Q3EDH8"/>
<dbReference type="BioGRID" id="22374">
    <property type="interactions" value="25"/>
</dbReference>
<dbReference type="IntAct" id="Q3EDH8">
    <property type="interactions" value="24"/>
</dbReference>
<dbReference type="STRING" id="3702.Q3EDH8"/>
<dbReference type="GlyCosmos" id="Q3EDH8">
    <property type="glycosylation" value="1 site, No reported glycans"/>
</dbReference>
<dbReference type="PaxDb" id="3702-AT1G06225.1"/>
<dbReference type="EnsemblPlants" id="AT1G06225.1">
    <property type="protein sequence ID" value="AT1G06225.1"/>
    <property type="gene ID" value="AT1G06225"/>
</dbReference>
<dbReference type="GeneID" id="837132"/>
<dbReference type="Gramene" id="AT1G06225.1">
    <property type="protein sequence ID" value="AT1G06225.1"/>
    <property type="gene ID" value="AT1G06225"/>
</dbReference>
<dbReference type="KEGG" id="ath:AT1G06225"/>
<dbReference type="Araport" id="AT1G06225"/>
<dbReference type="TAIR" id="AT1G06225">
    <property type="gene designation" value="CLE3"/>
</dbReference>
<dbReference type="HOGENOM" id="CLU_194792_0_0_1"/>
<dbReference type="InParanoid" id="Q3EDH8"/>
<dbReference type="OrthoDB" id="1578197at2759"/>
<dbReference type="PhylomeDB" id="Q3EDH8"/>
<dbReference type="PRO" id="PR:Q3EDH8"/>
<dbReference type="Proteomes" id="UP000006548">
    <property type="component" value="Chromosome 1"/>
</dbReference>
<dbReference type="ExpressionAtlas" id="Q3EDH8">
    <property type="expression patterns" value="baseline and differential"/>
</dbReference>
<dbReference type="GO" id="GO:0048046">
    <property type="term" value="C:apoplast"/>
    <property type="evidence" value="ECO:0000250"/>
    <property type="project" value="UniProtKB"/>
</dbReference>
<dbReference type="GO" id="GO:0033612">
    <property type="term" value="F:receptor serine/threonine kinase binding"/>
    <property type="evidence" value="ECO:0000250"/>
    <property type="project" value="UniProtKB"/>
</dbReference>
<dbReference type="GO" id="GO:0045168">
    <property type="term" value="P:cell-cell signaling involved in cell fate commitment"/>
    <property type="evidence" value="ECO:0000250"/>
    <property type="project" value="UniProtKB"/>
</dbReference>
<dbReference type="InterPro" id="IPR039616">
    <property type="entry name" value="CLE1-4"/>
</dbReference>
<dbReference type="PANTHER" id="PTHR33869">
    <property type="entry name" value="CLAVATA3/ESR (CLE)-RELATED PROTEIN 3"/>
    <property type="match status" value="1"/>
</dbReference>
<dbReference type="PANTHER" id="PTHR33869:SF26">
    <property type="entry name" value="CLAVATA3_ESR (CLE)-RELATED PROTEIN 3"/>
    <property type="match status" value="1"/>
</dbReference>
<gene>
    <name evidence="6" type="primary">CLE3</name>
    <name evidence="8" type="ordered locus">At1g06225</name>
    <name evidence="9" type="ORF">F9P14</name>
</gene>
<comment type="function">
    <molecule>CLE3p</molecule>
    <text evidence="5">Extracellular signal peptide that regulates cell fate.</text>
</comment>
<comment type="subcellular location">
    <molecule>CLE3p</molecule>
    <subcellularLocation>
        <location evidence="1">Secreted</location>
        <location evidence="1">Extracellular space</location>
    </subcellularLocation>
</comment>
<comment type="tissue specificity">
    <molecule>CLE3p</molecule>
    <text evidence="4">Mostly expressed in roots, stems and apex, and, to a lower extent, in seedlings, leaves, flowers, siliques and pollen.</text>
</comment>
<comment type="PTM">
    <molecule>CLE3p</molecule>
    <text evidence="1">The O-glycosylation (arabinosylation) of the hydroxyproline Pro-78 enhances binding affinity of the CLE3p peptide for its receptor.</text>
</comment>
<comment type="similarity">
    <text evidence="7">Belongs to the CLV3/ESR signal peptide family.</text>
</comment>
<comment type="sequence caution" evidence="7">
    <conflict type="erroneous termination">
        <sequence resource="EMBL-CDS" id="ABK28387"/>
    </conflict>
    <text>Extended C-terminus.</text>
</comment>
<sequence length="83" mass="9481">MASLKLWVCLVLLLVLELTSVHECRPLVAEERFSGSSRLKKIRRELFERLKEMKGRSEGEETILGNTLDSKRLSPGGPDPRHH</sequence>
<keyword id="KW-0175">Coiled coil</keyword>
<keyword id="KW-0217">Developmental protein</keyword>
<keyword id="KW-0221">Differentiation</keyword>
<keyword id="KW-0325">Glycoprotein</keyword>
<keyword id="KW-0379">Hydroxylation</keyword>
<keyword id="KW-1185">Reference proteome</keyword>
<keyword id="KW-0964">Secreted</keyword>
<keyword id="KW-0732">Signal</keyword>